<evidence type="ECO:0000255" key="1">
    <source>
        <dbReference type="HAMAP-Rule" id="MF_01237"/>
    </source>
</evidence>
<feature type="chain" id="PRO_1000139729" description="N-acetylneuraminate lyase">
    <location>
        <begin position="1"/>
        <end position="292"/>
    </location>
</feature>
<feature type="active site" description="Proton donor" evidence="1">
    <location>
        <position position="136"/>
    </location>
</feature>
<feature type="active site" description="Schiff-base intermediate with substrate" evidence="1">
    <location>
        <position position="164"/>
    </location>
</feature>
<feature type="binding site" evidence="1">
    <location>
        <position position="47"/>
    </location>
    <ligand>
        <name>aceneuramate</name>
        <dbReference type="ChEBI" id="CHEBI:173083"/>
    </ligand>
</feature>
<feature type="binding site" evidence="1">
    <location>
        <position position="48"/>
    </location>
    <ligand>
        <name>aceneuramate</name>
        <dbReference type="ChEBI" id="CHEBI:173083"/>
    </ligand>
</feature>
<feature type="binding site" evidence="1">
    <location>
        <position position="166"/>
    </location>
    <ligand>
        <name>aceneuramate</name>
        <dbReference type="ChEBI" id="CHEBI:173083"/>
    </ligand>
</feature>
<feature type="binding site" evidence="1">
    <location>
        <position position="188"/>
    </location>
    <ligand>
        <name>aceneuramate</name>
        <dbReference type="ChEBI" id="CHEBI:173083"/>
    </ligand>
</feature>
<feature type="binding site" evidence="1">
    <location>
        <position position="190"/>
    </location>
    <ligand>
        <name>aceneuramate</name>
        <dbReference type="ChEBI" id="CHEBI:173083"/>
    </ligand>
</feature>
<feature type="binding site" evidence="1">
    <location>
        <position position="191"/>
    </location>
    <ligand>
        <name>aceneuramate</name>
        <dbReference type="ChEBI" id="CHEBI:173083"/>
    </ligand>
</feature>
<feature type="binding site" evidence="1">
    <location>
        <position position="207"/>
    </location>
    <ligand>
        <name>aceneuramate</name>
        <dbReference type="ChEBI" id="CHEBI:173083"/>
    </ligand>
</feature>
<keyword id="KW-0119">Carbohydrate metabolism</keyword>
<keyword id="KW-0963">Cytoplasm</keyword>
<keyword id="KW-0456">Lyase</keyword>
<keyword id="KW-0704">Schiff base</keyword>
<organism>
    <name type="scientific">Actinobacillus pleuropneumoniae serotype 3 (strain JL03)</name>
    <dbReference type="NCBI Taxonomy" id="434271"/>
    <lineage>
        <taxon>Bacteria</taxon>
        <taxon>Pseudomonadati</taxon>
        <taxon>Pseudomonadota</taxon>
        <taxon>Gammaproteobacteria</taxon>
        <taxon>Pasteurellales</taxon>
        <taxon>Pasteurellaceae</taxon>
        <taxon>Actinobacillus</taxon>
    </lineage>
</organism>
<protein>
    <recommendedName>
        <fullName evidence="1">N-acetylneuraminate lyase</fullName>
        <shortName evidence="1">NAL</shortName>
        <shortName evidence="1">Neu5Ac lyase</shortName>
        <ecNumber evidence="1">4.1.3.3</ecNumber>
    </recommendedName>
    <alternativeName>
        <fullName evidence="1">N-acetylneuraminate pyruvate-lyase</fullName>
    </alternativeName>
    <alternativeName>
        <fullName evidence="1">N-acetylneuraminic acid aldolase</fullName>
    </alternativeName>
    <alternativeName>
        <fullName evidence="1">Sialate lyase</fullName>
    </alternativeName>
    <alternativeName>
        <fullName evidence="1">Sialic acid aldolase</fullName>
    </alternativeName>
    <alternativeName>
        <fullName evidence="1">Sialic acid lyase</fullName>
    </alternativeName>
</protein>
<comment type="function">
    <text evidence="1">Catalyzes the reversible aldol cleavage of N-acetylneuraminic acid (sialic acid; Neu5Ac) to form pyruvate and N-acetylmannosamine (ManNAc) via a Schiff base intermediate.</text>
</comment>
<comment type="catalytic activity">
    <reaction evidence="1">
        <text>aceneuramate = aldehydo-N-acetyl-D-mannosamine + pyruvate</text>
        <dbReference type="Rhea" id="RHEA:23296"/>
        <dbReference type="ChEBI" id="CHEBI:15361"/>
        <dbReference type="ChEBI" id="CHEBI:17122"/>
        <dbReference type="ChEBI" id="CHEBI:173083"/>
        <dbReference type="EC" id="4.1.3.3"/>
    </reaction>
</comment>
<comment type="pathway">
    <text evidence="1">Amino-sugar metabolism; N-acetylneuraminate degradation; D-fructose 6-phosphate from N-acetylneuraminate: step 1/5.</text>
</comment>
<comment type="subunit">
    <text evidence="1">Homotetramer.</text>
</comment>
<comment type="subcellular location">
    <subcellularLocation>
        <location evidence="1">Cytoplasm</location>
    </subcellularLocation>
</comment>
<comment type="similarity">
    <text evidence="1">Belongs to the DapA family. NanA subfamily.</text>
</comment>
<gene>
    <name evidence="1" type="primary">nanA</name>
    <name type="ordered locus">APJL_1789</name>
</gene>
<dbReference type="EC" id="4.1.3.3" evidence="1"/>
<dbReference type="EMBL" id="CP000687">
    <property type="protein sequence ID" value="ABY70339.1"/>
    <property type="molecule type" value="Genomic_DNA"/>
</dbReference>
<dbReference type="RefSeq" id="WP_012263384.1">
    <property type="nucleotide sequence ID" value="NC_010278.1"/>
</dbReference>
<dbReference type="SMR" id="B0BSI2"/>
<dbReference type="KEGG" id="apj:APJL_1789"/>
<dbReference type="HOGENOM" id="CLU_049343_6_0_6"/>
<dbReference type="UniPathway" id="UPA00629">
    <property type="reaction ID" value="UER00680"/>
</dbReference>
<dbReference type="Proteomes" id="UP000008547">
    <property type="component" value="Chromosome"/>
</dbReference>
<dbReference type="GO" id="GO:0005829">
    <property type="term" value="C:cytosol"/>
    <property type="evidence" value="ECO:0007669"/>
    <property type="project" value="TreeGrafter"/>
</dbReference>
<dbReference type="GO" id="GO:0008747">
    <property type="term" value="F:N-acetylneuraminate lyase activity"/>
    <property type="evidence" value="ECO:0007669"/>
    <property type="project" value="UniProtKB-UniRule"/>
</dbReference>
<dbReference type="GO" id="GO:0005975">
    <property type="term" value="P:carbohydrate metabolic process"/>
    <property type="evidence" value="ECO:0007669"/>
    <property type="project" value="UniProtKB-UniRule"/>
</dbReference>
<dbReference type="GO" id="GO:0019262">
    <property type="term" value="P:N-acetylneuraminate catabolic process"/>
    <property type="evidence" value="ECO:0007669"/>
    <property type="project" value="UniProtKB-UniRule"/>
</dbReference>
<dbReference type="CDD" id="cd00954">
    <property type="entry name" value="NAL"/>
    <property type="match status" value="1"/>
</dbReference>
<dbReference type="FunFam" id="3.20.20.70:FF:000039">
    <property type="entry name" value="N-acetylneuraminate lyase"/>
    <property type="match status" value="1"/>
</dbReference>
<dbReference type="Gene3D" id="3.20.20.70">
    <property type="entry name" value="Aldolase class I"/>
    <property type="match status" value="1"/>
</dbReference>
<dbReference type="HAMAP" id="MF_01237">
    <property type="entry name" value="N_acetylneuram_lyase"/>
    <property type="match status" value="1"/>
</dbReference>
<dbReference type="InterPro" id="IPR013785">
    <property type="entry name" value="Aldolase_TIM"/>
</dbReference>
<dbReference type="InterPro" id="IPR002220">
    <property type="entry name" value="DapA-like"/>
</dbReference>
<dbReference type="InterPro" id="IPR005264">
    <property type="entry name" value="NanA"/>
</dbReference>
<dbReference type="InterPro" id="IPR020625">
    <property type="entry name" value="Schiff_base-form_aldolases_AS"/>
</dbReference>
<dbReference type="InterPro" id="IPR020624">
    <property type="entry name" value="Schiff_base-form_aldolases_CS"/>
</dbReference>
<dbReference type="NCBIfam" id="TIGR00683">
    <property type="entry name" value="nanA"/>
    <property type="match status" value="1"/>
</dbReference>
<dbReference type="NCBIfam" id="NF003164">
    <property type="entry name" value="PRK04147.1"/>
    <property type="match status" value="1"/>
</dbReference>
<dbReference type="PANTHER" id="PTHR42849">
    <property type="entry name" value="N-ACETYLNEURAMINATE LYASE"/>
    <property type="match status" value="1"/>
</dbReference>
<dbReference type="PANTHER" id="PTHR42849:SF1">
    <property type="entry name" value="N-ACETYLNEURAMINATE LYASE"/>
    <property type="match status" value="1"/>
</dbReference>
<dbReference type="Pfam" id="PF00701">
    <property type="entry name" value="DHDPS"/>
    <property type="match status" value="1"/>
</dbReference>
<dbReference type="PIRSF" id="PIRSF001365">
    <property type="entry name" value="DHDPS"/>
    <property type="match status" value="1"/>
</dbReference>
<dbReference type="PRINTS" id="PR00146">
    <property type="entry name" value="DHPICSNTHASE"/>
</dbReference>
<dbReference type="SMART" id="SM01130">
    <property type="entry name" value="DHDPS"/>
    <property type="match status" value="1"/>
</dbReference>
<dbReference type="SUPFAM" id="SSF51569">
    <property type="entry name" value="Aldolase"/>
    <property type="match status" value="1"/>
</dbReference>
<dbReference type="PROSITE" id="PS00665">
    <property type="entry name" value="DHDPS_1"/>
    <property type="match status" value="1"/>
</dbReference>
<dbReference type="PROSITE" id="PS00666">
    <property type="entry name" value="DHDPS_2"/>
    <property type="match status" value="1"/>
</dbReference>
<accession>B0BSI2</accession>
<proteinExistence type="inferred from homology"/>
<sequence>MKNLTGIFSALLVAFNEDGSINEQGLRQIIRHNIDKMKVDGLYVGGSTGENFMLSTAEKKEIFRIAKDEAKDQIALIAQVGSVNLQEAVELGKYATELGYDCLSAVTPFYYKFSFAEIKHYYDTIIAETGNNMIVYSIPFLTGVNIGVEQFGELYKNPKILGVKFTAGDFYLLERLKKAYPNHLIWAGFDEMMLPAVALGVDGAIGSTFNVNTPRARQIFELTKQGKLAEALAVQHVTNDLIEGILANGLYLTIKELLKLQGVEAGYCREPMTAKATDKQLEVAKALYAKFL</sequence>
<name>NANA_ACTPJ</name>
<reference key="1">
    <citation type="journal article" date="2008" name="PLoS ONE">
        <title>Genome biology of Actinobacillus pleuropneumoniae JL03, an isolate of serotype 3 prevalent in China.</title>
        <authorList>
            <person name="Xu Z."/>
            <person name="Zhou Y."/>
            <person name="Li L."/>
            <person name="Zhou R."/>
            <person name="Xiao S."/>
            <person name="Wan Y."/>
            <person name="Zhang S."/>
            <person name="Wang K."/>
            <person name="Li W."/>
            <person name="Li L."/>
            <person name="Jin H."/>
            <person name="Kang M."/>
            <person name="Dalai B."/>
            <person name="Li T."/>
            <person name="Liu L."/>
            <person name="Cheng Y."/>
            <person name="Zhang L."/>
            <person name="Xu T."/>
            <person name="Zheng H."/>
            <person name="Pu S."/>
            <person name="Wang B."/>
            <person name="Gu W."/>
            <person name="Zhang X.L."/>
            <person name="Zhu G.-F."/>
            <person name="Wang S."/>
            <person name="Zhao G.-P."/>
            <person name="Chen H."/>
        </authorList>
    </citation>
    <scope>NUCLEOTIDE SEQUENCE [LARGE SCALE GENOMIC DNA]</scope>
    <source>
        <strain>JL03</strain>
    </source>
</reference>